<organism>
    <name type="scientific">Methanococcus aeolicus (strain ATCC BAA-1280 / DSM 17508 / OCM 812 / Nankai-3)</name>
    <dbReference type="NCBI Taxonomy" id="419665"/>
    <lineage>
        <taxon>Archaea</taxon>
        <taxon>Methanobacteriati</taxon>
        <taxon>Methanobacteriota</taxon>
        <taxon>Methanomada group</taxon>
        <taxon>Methanococci</taxon>
        <taxon>Methanococcales</taxon>
        <taxon>Methanococcaceae</taxon>
        <taxon>Methanococcus</taxon>
    </lineage>
</organism>
<sequence>MSSIKPAAKKLRLAKAGKQNRRVPMFVIAKTGGKVRTHTKMRNWRRNTLKK</sequence>
<evidence type="ECO:0000255" key="1">
    <source>
        <dbReference type="HAMAP-Rule" id="MF_00629"/>
    </source>
</evidence>
<evidence type="ECO:0000305" key="2"/>
<comment type="similarity">
    <text evidence="1">Belongs to the eukaryotic ribosomal protein eL39 family.</text>
</comment>
<keyword id="KW-0687">Ribonucleoprotein</keyword>
<keyword id="KW-0689">Ribosomal protein</keyword>
<protein>
    <recommendedName>
        <fullName evidence="1">Large ribosomal subunit protein eL39</fullName>
    </recommendedName>
    <alternativeName>
        <fullName evidence="2">50S ribosomal protein L39e</fullName>
    </alternativeName>
</protein>
<feature type="chain" id="PRO_1000051684" description="Large ribosomal subunit protein eL39">
    <location>
        <begin position="1"/>
        <end position="51"/>
    </location>
</feature>
<proteinExistence type="inferred from homology"/>
<gene>
    <name evidence="1" type="primary">rpl39e</name>
    <name type="ordered locus">Maeo_1000</name>
</gene>
<reference key="1">
    <citation type="submission" date="2007-06" db="EMBL/GenBank/DDBJ databases">
        <title>Complete sequence of Methanococcus aeolicus Nankai-3.</title>
        <authorList>
            <consortium name="US DOE Joint Genome Institute"/>
            <person name="Copeland A."/>
            <person name="Lucas S."/>
            <person name="Lapidus A."/>
            <person name="Barry K."/>
            <person name="Glavina del Rio T."/>
            <person name="Dalin E."/>
            <person name="Tice H."/>
            <person name="Pitluck S."/>
            <person name="Chain P."/>
            <person name="Malfatti S."/>
            <person name="Shin M."/>
            <person name="Vergez L."/>
            <person name="Schmutz J."/>
            <person name="Larimer F."/>
            <person name="Land M."/>
            <person name="Hauser L."/>
            <person name="Kyrpides N."/>
            <person name="Lykidis A."/>
            <person name="Sieprawska-Lupa M."/>
            <person name="Whitman W.B."/>
            <person name="Richardson P."/>
        </authorList>
    </citation>
    <scope>NUCLEOTIDE SEQUENCE [LARGE SCALE GENOMIC DNA]</scope>
    <source>
        <strain>ATCC BAA-1280 / DSM 17508 / OCM 812 / Nankai-3</strain>
    </source>
</reference>
<dbReference type="EMBL" id="CP000743">
    <property type="protein sequence ID" value="ABR56578.1"/>
    <property type="molecule type" value="Genomic_DNA"/>
</dbReference>
<dbReference type="RefSeq" id="WP_011973710.1">
    <property type="nucleotide sequence ID" value="NC_009635.1"/>
</dbReference>
<dbReference type="SMR" id="A6UVQ6"/>
<dbReference type="STRING" id="419665.Maeo_1000"/>
<dbReference type="GeneID" id="5326843"/>
<dbReference type="KEGG" id="mae:Maeo_1000"/>
<dbReference type="eggNOG" id="arCOG04177">
    <property type="taxonomic scope" value="Archaea"/>
</dbReference>
<dbReference type="HOGENOM" id="CLU_181948_4_0_2"/>
<dbReference type="OrthoDB" id="65887at2157"/>
<dbReference type="Proteomes" id="UP000001106">
    <property type="component" value="Chromosome"/>
</dbReference>
<dbReference type="GO" id="GO:1990904">
    <property type="term" value="C:ribonucleoprotein complex"/>
    <property type="evidence" value="ECO:0007669"/>
    <property type="project" value="UniProtKB-KW"/>
</dbReference>
<dbReference type="GO" id="GO:0005840">
    <property type="term" value="C:ribosome"/>
    <property type="evidence" value="ECO:0007669"/>
    <property type="project" value="UniProtKB-KW"/>
</dbReference>
<dbReference type="GO" id="GO:0003735">
    <property type="term" value="F:structural constituent of ribosome"/>
    <property type="evidence" value="ECO:0007669"/>
    <property type="project" value="InterPro"/>
</dbReference>
<dbReference type="GO" id="GO:0006412">
    <property type="term" value="P:translation"/>
    <property type="evidence" value="ECO:0007669"/>
    <property type="project" value="UniProtKB-UniRule"/>
</dbReference>
<dbReference type="FunFam" id="1.10.1620.10:FF:000001">
    <property type="entry name" value="60S ribosomal protein-like L39"/>
    <property type="match status" value="1"/>
</dbReference>
<dbReference type="Gene3D" id="1.10.1620.10">
    <property type="entry name" value="Ribosomal protein L39e"/>
    <property type="match status" value="1"/>
</dbReference>
<dbReference type="HAMAP" id="MF_00629">
    <property type="entry name" value="Ribosomal_eL39"/>
    <property type="match status" value="1"/>
</dbReference>
<dbReference type="InterPro" id="IPR000077">
    <property type="entry name" value="Ribosomal_eL39"/>
</dbReference>
<dbReference type="InterPro" id="IPR020083">
    <property type="entry name" value="Ribosomal_eL39_CS"/>
</dbReference>
<dbReference type="InterPro" id="IPR023626">
    <property type="entry name" value="Ribosomal_eL39_dom_sf"/>
</dbReference>
<dbReference type="NCBIfam" id="NF002316">
    <property type="entry name" value="PRK01242.1"/>
    <property type="match status" value="1"/>
</dbReference>
<dbReference type="Pfam" id="PF00832">
    <property type="entry name" value="Ribosomal_L39"/>
    <property type="match status" value="1"/>
</dbReference>
<dbReference type="SUPFAM" id="SSF48662">
    <property type="entry name" value="Ribosomal protein L39e"/>
    <property type="match status" value="1"/>
</dbReference>
<dbReference type="PROSITE" id="PS00051">
    <property type="entry name" value="RIBOSOMAL_L39E"/>
    <property type="match status" value="1"/>
</dbReference>
<name>RL39_META3</name>
<accession>A6UVQ6</accession>